<gene>
    <name type="primary">ybaC</name>
    <name type="ordered locus">BSU01140</name>
</gene>
<feature type="chain" id="PRO_0000359934" description="Probable aminopeptidase YbaC">
    <location>
        <begin position="1"/>
        <end position="318"/>
    </location>
</feature>
<feature type="active site" description="Nucleophile" evidence="1">
    <location>
        <position position="115"/>
    </location>
</feature>
<feature type="active site" evidence="1">
    <location>
        <position position="266"/>
    </location>
</feature>
<feature type="active site" description="Proton donor" evidence="1">
    <location>
        <position position="296"/>
    </location>
</feature>
<feature type="sequence conflict" description="In Ref. 1; BAA11005." evidence="2" ref="1">
    <original>H</original>
    <variation>N</variation>
    <location>
        <position position="316"/>
    </location>
</feature>
<dbReference type="EC" id="3.4.11.-"/>
<dbReference type="EMBL" id="D64127">
    <property type="protein sequence ID" value="BAA11005.1"/>
    <property type="molecule type" value="Genomic_DNA"/>
</dbReference>
<dbReference type="EMBL" id="AL009126">
    <property type="protein sequence ID" value="CAB11890.2"/>
    <property type="molecule type" value="Genomic_DNA"/>
</dbReference>
<dbReference type="PIR" id="D69742">
    <property type="entry name" value="D69742"/>
</dbReference>
<dbReference type="RefSeq" id="NP_387995.2">
    <property type="nucleotide sequence ID" value="NC_000964.3"/>
</dbReference>
<dbReference type="RefSeq" id="WP_003235060.1">
    <property type="nucleotide sequence ID" value="NZ_OZ025638.1"/>
</dbReference>
<dbReference type="SMR" id="P70981"/>
<dbReference type="FunCoup" id="P70981">
    <property type="interactions" value="257"/>
</dbReference>
<dbReference type="STRING" id="224308.BSU01140"/>
<dbReference type="ESTHER" id="bacsu-YBAC">
    <property type="family name" value="Proline_iminopeptidase"/>
</dbReference>
<dbReference type="PaxDb" id="224308-BSU01140"/>
<dbReference type="EnsemblBacteria" id="CAB11890">
    <property type="protein sequence ID" value="CAB11890"/>
    <property type="gene ID" value="BSU_01140"/>
</dbReference>
<dbReference type="GeneID" id="936866"/>
<dbReference type="KEGG" id="bsu:BSU01140"/>
<dbReference type="PATRIC" id="fig|224308.179.peg.117"/>
<dbReference type="eggNOG" id="COG0596">
    <property type="taxonomic scope" value="Bacteria"/>
</dbReference>
<dbReference type="InParanoid" id="P70981"/>
<dbReference type="OrthoDB" id="53505at2"/>
<dbReference type="PhylomeDB" id="P70981"/>
<dbReference type="BioCyc" id="BSUB:BSU01140-MONOMER"/>
<dbReference type="Proteomes" id="UP000001570">
    <property type="component" value="Chromosome"/>
</dbReference>
<dbReference type="GO" id="GO:0004177">
    <property type="term" value="F:aminopeptidase activity"/>
    <property type="evidence" value="ECO:0007669"/>
    <property type="project" value="UniProtKB-KW"/>
</dbReference>
<dbReference type="GO" id="GO:0016787">
    <property type="term" value="F:hydrolase activity"/>
    <property type="evidence" value="ECO:0000318"/>
    <property type="project" value="GO_Central"/>
</dbReference>
<dbReference type="GO" id="GO:0006508">
    <property type="term" value="P:proteolysis"/>
    <property type="evidence" value="ECO:0007669"/>
    <property type="project" value="UniProtKB-KW"/>
</dbReference>
<dbReference type="Gene3D" id="3.40.50.1820">
    <property type="entry name" value="alpha/beta hydrolase"/>
    <property type="match status" value="1"/>
</dbReference>
<dbReference type="InterPro" id="IPR029058">
    <property type="entry name" value="AB_hydrolase_fold"/>
</dbReference>
<dbReference type="InterPro" id="IPR050266">
    <property type="entry name" value="AB_hydrolase_sf"/>
</dbReference>
<dbReference type="InterPro" id="IPR022742">
    <property type="entry name" value="Hydrolase_4"/>
</dbReference>
<dbReference type="InterPro" id="IPR002410">
    <property type="entry name" value="Peptidase_S33"/>
</dbReference>
<dbReference type="PANTHER" id="PTHR43798:SF33">
    <property type="entry name" value="HYDROLASE, PUTATIVE (AFU_ORTHOLOGUE AFUA_2G14860)-RELATED"/>
    <property type="match status" value="1"/>
</dbReference>
<dbReference type="PANTHER" id="PTHR43798">
    <property type="entry name" value="MONOACYLGLYCEROL LIPASE"/>
    <property type="match status" value="1"/>
</dbReference>
<dbReference type="Pfam" id="PF12146">
    <property type="entry name" value="Hydrolase_4"/>
    <property type="match status" value="1"/>
</dbReference>
<dbReference type="PRINTS" id="PR00793">
    <property type="entry name" value="PROAMNOPTASE"/>
</dbReference>
<dbReference type="SUPFAM" id="SSF53474">
    <property type="entry name" value="alpha/beta-Hydrolases"/>
    <property type="match status" value="1"/>
</dbReference>
<organism>
    <name type="scientific">Bacillus subtilis (strain 168)</name>
    <dbReference type="NCBI Taxonomy" id="224308"/>
    <lineage>
        <taxon>Bacteria</taxon>
        <taxon>Bacillati</taxon>
        <taxon>Bacillota</taxon>
        <taxon>Bacilli</taxon>
        <taxon>Bacillales</taxon>
        <taxon>Bacillaceae</taxon>
        <taxon>Bacillus</taxon>
    </lineage>
</organism>
<proteinExistence type="inferred from homology"/>
<accession>P70981</accession>
<accession>Q797S3</accession>
<protein>
    <recommendedName>
        <fullName>Probable aminopeptidase YbaC</fullName>
        <ecNumber>3.4.11.-</ecNumber>
    </recommendedName>
</protein>
<name>YBAC_BACSU</name>
<reference key="1">
    <citation type="journal article" date="1996" name="Microbiology">
        <title>Sequence analysis of a 50 kb region between spo0H and rrnH on the Bacillus subtilis chromosome.</title>
        <authorList>
            <person name="Yasumoto K."/>
            <person name="Liu H."/>
            <person name="Jeong S.M."/>
            <person name="Ohashi Y."/>
            <person name="Kakinuma S."/>
            <person name="Tanaka K."/>
            <person name="Kawamura F."/>
            <person name="Yoshikawa H."/>
            <person name="Takahashi H."/>
        </authorList>
    </citation>
    <scope>NUCLEOTIDE SEQUENCE [GENOMIC DNA]</scope>
    <source>
        <strain>168</strain>
    </source>
</reference>
<reference key="2">
    <citation type="journal article" date="1997" name="Nature">
        <title>The complete genome sequence of the Gram-positive bacterium Bacillus subtilis.</title>
        <authorList>
            <person name="Kunst F."/>
            <person name="Ogasawara N."/>
            <person name="Moszer I."/>
            <person name="Albertini A.M."/>
            <person name="Alloni G."/>
            <person name="Azevedo V."/>
            <person name="Bertero M.G."/>
            <person name="Bessieres P."/>
            <person name="Bolotin A."/>
            <person name="Borchert S."/>
            <person name="Borriss R."/>
            <person name="Boursier L."/>
            <person name="Brans A."/>
            <person name="Braun M."/>
            <person name="Brignell S.C."/>
            <person name="Bron S."/>
            <person name="Brouillet S."/>
            <person name="Bruschi C.V."/>
            <person name="Caldwell B."/>
            <person name="Capuano V."/>
            <person name="Carter N.M."/>
            <person name="Choi S.-K."/>
            <person name="Codani J.-J."/>
            <person name="Connerton I.F."/>
            <person name="Cummings N.J."/>
            <person name="Daniel R.A."/>
            <person name="Denizot F."/>
            <person name="Devine K.M."/>
            <person name="Duesterhoeft A."/>
            <person name="Ehrlich S.D."/>
            <person name="Emmerson P.T."/>
            <person name="Entian K.-D."/>
            <person name="Errington J."/>
            <person name="Fabret C."/>
            <person name="Ferrari E."/>
            <person name="Foulger D."/>
            <person name="Fritz C."/>
            <person name="Fujita M."/>
            <person name="Fujita Y."/>
            <person name="Fuma S."/>
            <person name="Galizzi A."/>
            <person name="Galleron N."/>
            <person name="Ghim S.-Y."/>
            <person name="Glaser P."/>
            <person name="Goffeau A."/>
            <person name="Golightly E.J."/>
            <person name="Grandi G."/>
            <person name="Guiseppi G."/>
            <person name="Guy B.J."/>
            <person name="Haga K."/>
            <person name="Haiech J."/>
            <person name="Harwood C.R."/>
            <person name="Henaut A."/>
            <person name="Hilbert H."/>
            <person name="Holsappel S."/>
            <person name="Hosono S."/>
            <person name="Hullo M.-F."/>
            <person name="Itaya M."/>
            <person name="Jones L.-M."/>
            <person name="Joris B."/>
            <person name="Karamata D."/>
            <person name="Kasahara Y."/>
            <person name="Klaerr-Blanchard M."/>
            <person name="Klein C."/>
            <person name="Kobayashi Y."/>
            <person name="Koetter P."/>
            <person name="Koningstein G."/>
            <person name="Krogh S."/>
            <person name="Kumano M."/>
            <person name="Kurita K."/>
            <person name="Lapidus A."/>
            <person name="Lardinois S."/>
            <person name="Lauber J."/>
            <person name="Lazarevic V."/>
            <person name="Lee S.-M."/>
            <person name="Levine A."/>
            <person name="Liu H."/>
            <person name="Masuda S."/>
            <person name="Mauel C."/>
            <person name="Medigue C."/>
            <person name="Medina N."/>
            <person name="Mellado R.P."/>
            <person name="Mizuno M."/>
            <person name="Moestl D."/>
            <person name="Nakai S."/>
            <person name="Noback M."/>
            <person name="Noone D."/>
            <person name="O'Reilly M."/>
            <person name="Ogawa K."/>
            <person name="Ogiwara A."/>
            <person name="Oudega B."/>
            <person name="Park S.-H."/>
            <person name="Parro V."/>
            <person name="Pohl T.M."/>
            <person name="Portetelle D."/>
            <person name="Porwollik S."/>
            <person name="Prescott A.M."/>
            <person name="Presecan E."/>
            <person name="Pujic P."/>
            <person name="Purnelle B."/>
            <person name="Rapoport G."/>
            <person name="Rey M."/>
            <person name="Reynolds S."/>
            <person name="Rieger M."/>
            <person name="Rivolta C."/>
            <person name="Rocha E."/>
            <person name="Roche B."/>
            <person name="Rose M."/>
            <person name="Sadaie Y."/>
            <person name="Sato T."/>
            <person name="Scanlan E."/>
            <person name="Schleich S."/>
            <person name="Schroeter R."/>
            <person name="Scoffone F."/>
            <person name="Sekiguchi J."/>
            <person name="Sekowska A."/>
            <person name="Seror S.J."/>
            <person name="Serror P."/>
            <person name="Shin B.-S."/>
            <person name="Soldo B."/>
            <person name="Sorokin A."/>
            <person name="Tacconi E."/>
            <person name="Takagi T."/>
            <person name="Takahashi H."/>
            <person name="Takemaru K."/>
            <person name="Takeuchi M."/>
            <person name="Tamakoshi A."/>
            <person name="Tanaka T."/>
            <person name="Terpstra P."/>
            <person name="Tognoni A."/>
            <person name="Tosato V."/>
            <person name="Uchiyama S."/>
            <person name="Vandenbol M."/>
            <person name="Vannier F."/>
            <person name="Vassarotti A."/>
            <person name="Viari A."/>
            <person name="Wambutt R."/>
            <person name="Wedler E."/>
            <person name="Wedler H."/>
            <person name="Weitzenegger T."/>
            <person name="Winters P."/>
            <person name="Wipat A."/>
            <person name="Yamamoto H."/>
            <person name="Yamane K."/>
            <person name="Yasumoto K."/>
            <person name="Yata K."/>
            <person name="Yoshida K."/>
            <person name="Yoshikawa H.-F."/>
            <person name="Zumstein E."/>
            <person name="Yoshikawa H."/>
            <person name="Danchin A."/>
        </authorList>
    </citation>
    <scope>NUCLEOTIDE SEQUENCE [LARGE SCALE GENOMIC DNA]</scope>
    <source>
        <strain>168</strain>
    </source>
</reference>
<reference key="3">
    <citation type="journal article" date="2009" name="Microbiology">
        <title>From a consortium sequence to a unified sequence: the Bacillus subtilis 168 reference genome a decade later.</title>
        <authorList>
            <person name="Barbe V."/>
            <person name="Cruveiller S."/>
            <person name="Kunst F."/>
            <person name="Lenoble P."/>
            <person name="Meurice G."/>
            <person name="Sekowska A."/>
            <person name="Vallenet D."/>
            <person name="Wang T."/>
            <person name="Moszer I."/>
            <person name="Medigue C."/>
            <person name="Danchin A."/>
        </authorList>
    </citation>
    <scope>SEQUENCE REVISION TO 316</scope>
</reference>
<comment type="function">
    <text evidence="1">Probable aminopeptidase.</text>
</comment>
<comment type="similarity">
    <text evidence="2">Belongs to the peptidase S33 family.</text>
</comment>
<evidence type="ECO:0000250" key="1"/>
<evidence type="ECO:0000305" key="2"/>
<sequence>MIPEKKSIAIMKELSIGNTKQMLMINGVDVKNPLLLFLHGGPGTPQIGYVRHYQKELEQYFTVVHWDQRGSGLSYSKRISHHSMTINHFIKDTIQVTQWLLAHFSKSKLYLAGHSWGSILALHVLQQRPDLFYTYYGISQVVNPQDEESTAYQHIREISESKKASILSFLTRFIGAPPWKQDIQHLIYRFCVELTRGGFTHRHRQSLAVLFQMLTGNEYGVRNMHSFLNGLRFSKKHLTDELYRFNAFTSVPSIKVPCVFISGKHDLIVPAEISKQYYQELEAPEKRWFQFENSAHTPHIEEPSLFANTLSRHARHHL</sequence>
<keyword id="KW-0031">Aminopeptidase</keyword>
<keyword id="KW-0378">Hydrolase</keyword>
<keyword id="KW-0645">Protease</keyword>
<keyword id="KW-1185">Reference proteome</keyword>